<dbReference type="EC" id="3.6.5.-" evidence="1"/>
<dbReference type="EMBL" id="CP001161">
    <property type="protein sequence ID" value="ACL30743.1"/>
    <property type="molecule type" value="Genomic_DNA"/>
</dbReference>
<dbReference type="SMR" id="B8D9H2"/>
<dbReference type="KEGG" id="bap:BUAP5A_382"/>
<dbReference type="HOGENOM" id="CLU_011747_2_0_6"/>
<dbReference type="OrthoDB" id="9807318at2"/>
<dbReference type="Proteomes" id="UP000006904">
    <property type="component" value="Chromosome"/>
</dbReference>
<dbReference type="GO" id="GO:0005737">
    <property type="term" value="C:cytoplasm"/>
    <property type="evidence" value="ECO:0007669"/>
    <property type="project" value="UniProtKB-SubCell"/>
</dbReference>
<dbReference type="GO" id="GO:0005525">
    <property type="term" value="F:GTP binding"/>
    <property type="evidence" value="ECO:0007669"/>
    <property type="project" value="UniProtKB-UniRule"/>
</dbReference>
<dbReference type="GO" id="GO:0003924">
    <property type="term" value="F:GTPase activity"/>
    <property type="evidence" value="ECO:0007669"/>
    <property type="project" value="UniProtKB-UniRule"/>
</dbReference>
<dbReference type="GO" id="GO:0000287">
    <property type="term" value="F:magnesium ion binding"/>
    <property type="evidence" value="ECO:0007669"/>
    <property type="project" value="InterPro"/>
</dbReference>
<dbReference type="GO" id="GO:0042254">
    <property type="term" value="P:ribosome biogenesis"/>
    <property type="evidence" value="ECO:0007669"/>
    <property type="project" value="UniProtKB-UniRule"/>
</dbReference>
<dbReference type="CDD" id="cd01898">
    <property type="entry name" value="Obg"/>
    <property type="match status" value="1"/>
</dbReference>
<dbReference type="FunFam" id="2.70.210.12:FF:000001">
    <property type="entry name" value="GTPase Obg"/>
    <property type="match status" value="1"/>
</dbReference>
<dbReference type="Gene3D" id="2.70.210.12">
    <property type="entry name" value="GTP1/OBG domain"/>
    <property type="match status" value="1"/>
</dbReference>
<dbReference type="Gene3D" id="3.40.50.300">
    <property type="entry name" value="P-loop containing nucleotide triphosphate hydrolases"/>
    <property type="match status" value="1"/>
</dbReference>
<dbReference type="HAMAP" id="MF_01454">
    <property type="entry name" value="GTPase_Obg"/>
    <property type="match status" value="1"/>
</dbReference>
<dbReference type="InterPro" id="IPR031167">
    <property type="entry name" value="G_OBG"/>
</dbReference>
<dbReference type="InterPro" id="IPR006073">
    <property type="entry name" value="GTP-bd"/>
</dbReference>
<dbReference type="InterPro" id="IPR014100">
    <property type="entry name" value="GTP-bd_Obg/CgtA"/>
</dbReference>
<dbReference type="InterPro" id="IPR006074">
    <property type="entry name" value="GTP1-OBG_CS"/>
</dbReference>
<dbReference type="InterPro" id="IPR006169">
    <property type="entry name" value="GTP1_OBG_dom"/>
</dbReference>
<dbReference type="InterPro" id="IPR036726">
    <property type="entry name" value="GTP1_OBG_dom_sf"/>
</dbReference>
<dbReference type="InterPro" id="IPR045086">
    <property type="entry name" value="OBG_GTPase"/>
</dbReference>
<dbReference type="InterPro" id="IPR027417">
    <property type="entry name" value="P-loop_NTPase"/>
</dbReference>
<dbReference type="NCBIfam" id="TIGR02729">
    <property type="entry name" value="Obg_CgtA"/>
    <property type="match status" value="1"/>
</dbReference>
<dbReference type="NCBIfam" id="NF008955">
    <property type="entry name" value="PRK12297.1"/>
    <property type="match status" value="1"/>
</dbReference>
<dbReference type="NCBIfam" id="NF008956">
    <property type="entry name" value="PRK12299.1"/>
    <property type="match status" value="1"/>
</dbReference>
<dbReference type="PANTHER" id="PTHR11702">
    <property type="entry name" value="DEVELOPMENTALLY REGULATED GTP-BINDING PROTEIN-RELATED"/>
    <property type="match status" value="1"/>
</dbReference>
<dbReference type="PANTHER" id="PTHR11702:SF31">
    <property type="entry name" value="MITOCHONDRIAL RIBOSOME-ASSOCIATED GTPASE 2"/>
    <property type="match status" value="1"/>
</dbReference>
<dbReference type="Pfam" id="PF01018">
    <property type="entry name" value="GTP1_OBG"/>
    <property type="match status" value="1"/>
</dbReference>
<dbReference type="Pfam" id="PF01926">
    <property type="entry name" value="MMR_HSR1"/>
    <property type="match status" value="1"/>
</dbReference>
<dbReference type="PIRSF" id="PIRSF002401">
    <property type="entry name" value="GTP_bd_Obg/CgtA"/>
    <property type="match status" value="1"/>
</dbReference>
<dbReference type="PRINTS" id="PR00326">
    <property type="entry name" value="GTP1OBG"/>
</dbReference>
<dbReference type="SUPFAM" id="SSF82051">
    <property type="entry name" value="Obg GTP-binding protein N-terminal domain"/>
    <property type="match status" value="1"/>
</dbReference>
<dbReference type="SUPFAM" id="SSF52540">
    <property type="entry name" value="P-loop containing nucleoside triphosphate hydrolases"/>
    <property type="match status" value="1"/>
</dbReference>
<dbReference type="PROSITE" id="PS51710">
    <property type="entry name" value="G_OBG"/>
    <property type="match status" value="1"/>
</dbReference>
<dbReference type="PROSITE" id="PS00905">
    <property type="entry name" value="GTP1_OBG"/>
    <property type="match status" value="1"/>
</dbReference>
<dbReference type="PROSITE" id="PS51883">
    <property type="entry name" value="OBG"/>
    <property type="match status" value="1"/>
</dbReference>
<comment type="function">
    <text evidence="1">An essential GTPase which binds GTP, GDP and possibly (p)ppGpp with moderate affinity, with high nucleotide exchange rates and a fairly low GTP hydrolysis rate. Plays a role in control of the cell cycle, stress response, ribosome biogenesis and in those bacteria that undergo differentiation, in morphogenesis control.</text>
</comment>
<comment type="cofactor">
    <cofactor evidence="1">
        <name>Mg(2+)</name>
        <dbReference type="ChEBI" id="CHEBI:18420"/>
    </cofactor>
</comment>
<comment type="subunit">
    <text evidence="1">Monomer.</text>
</comment>
<comment type="subcellular location">
    <subcellularLocation>
        <location evidence="1">Cytoplasm</location>
    </subcellularLocation>
</comment>
<comment type="similarity">
    <text evidence="1">Belongs to the TRAFAC class OBG-HflX-like GTPase superfamily. OBG GTPase family.</text>
</comment>
<protein>
    <recommendedName>
        <fullName evidence="1">GTPase Obg</fullName>
        <ecNumber evidence="1">3.6.5.-</ecNumber>
    </recommendedName>
    <alternativeName>
        <fullName evidence="1">GTP-binding protein Obg</fullName>
    </alternativeName>
</protein>
<reference key="1">
    <citation type="journal article" date="2009" name="Science">
        <title>The dynamics and time scale of ongoing genomic erosion in symbiotic bacteria.</title>
        <authorList>
            <person name="Moran N.A."/>
            <person name="McLaughlin H.J."/>
            <person name="Sorek R."/>
        </authorList>
    </citation>
    <scope>NUCLEOTIDE SEQUENCE [LARGE SCALE GENOMIC DNA]</scope>
    <source>
        <strain>5A</strain>
    </source>
</reference>
<keyword id="KW-0963">Cytoplasm</keyword>
<keyword id="KW-0342">GTP-binding</keyword>
<keyword id="KW-0378">Hydrolase</keyword>
<keyword id="KW-0460">Magnesium</keyword>
<keyword id="KW-0479">Metal-binding</keyword>
<keyword id="KW-0547">Nucleotide-binding</keyword>
<sequence>MKFIDQAIIHVIAGNGGNGCVSFRREKYIPKGGPDGGNGGDGGNIWLEANNNLNTLIDLRFKKKFQAQNGQNGSSRKSSGKKGDDIKIHVPIGTKVINYQTREIIGDLIQHKQKMLIAKGGWHGLGNARFKSSTNRTPRQSTLGSIGEKRDIQLELMLLADVGTLGMPNVGKSTLVTNISGAKTKISDYPFTTLHPVLGSVNIQKNKKFIIADIPGIIKGASYGAGLGIRFLKHLERCKLLLHIIDLVPQNNCHPSDNIKTVLNELKKYSLKLYNKPRWFIFNKIDLLSVEELNQIIKEIIFQFKIHEKYYLISSMKKIGIKKLCSDITKYLKK</sequence>
<proteinExistence type="inferred from homology"/>
<evidence type="ECO:0000255" key="1">
    <source>
        <dbReference type="HAMAP-Rule" id="MF_01454"/>
    </source>
</evidence>
<evidence type="ECO:0000255" key="2">
    <source>
        <dbReference type="PROSITE-ProRule" id="PRU01231"/>
    </source>
</evidence>
<evidence type="ECO:0000256" key="3">
    <source>
        <dbReference type="SAM" id="MobiDB-lite"/>
    </source>
</evidence>
<feature type="chain" id="PRO_0000385773" description="GTPase Obg">
    <location>
        <begin position="1"/>
        <end position="334"/>
    </location>
</feature>
<feature type="domain" description="Obg" evidence="2">
    <location>
        <begin position="1"/>
        <end position="159"/>
    </location>
</feature>
<feature type="domain" description="OBG-type G" evidence="1">
    <location>
        <begin position="160"/>
        <end position="333"/>
    </location>
</feature>
<feature type="region of interest" description="Disordered" evidence="3">
    <location>
        <begin position="67"/>
        <end position="86"/>
    </location>
</feature>
<feature type="compositionally biased region" description="Low complexity" evidence="3">
    <location>
        <begin position="68"/>
        <end position="77"/>
    </location>
</feature>
<feature type="binding site" evidence="1">
    <location>
        <begin position="166"/>
        <end position="173"/>
    </location>
    <ligand>
        <name>GTP</name>
        <dbReference type="ChEBI" id="CHEBI:37565"/>
    </ligand>
</feature>
<feature type="binding site" evidence="1">
    <location>
        <position position="173"/>
    </location>
    <ligand>
        <name>Mg(2+)</name>
        <dbReference type="ChEBI" id="CHEBI:18420"/>
    </ligand>
</feature>
<feature type="binding site" evidence="1">
    <location>
        <begin position="191"/>
        <end position="195"/>
    </location>
    <ligand>
        <name>GTP</name>
        <dbReference type="ChEBI" id="CHEBI:37565"/>
    </ligand>
</feature>
<feature type="binding site" evidence="1">
    <location>
        <position position="193"/>
    </location>
    <ligand>
        <name>Mg(2+)</name>
        <dbReference type="ChEBI" id="CHEBI:18420"/>
    </ligand>
</feature>
<feature type="binding site" evidence="1">
    <location>
        <begin position="213"/>
        <end position="216"/>
    </location>
    <ligand>
        <name>GTP</name>
        <dbReference type="ChEBI" id="CHEBI:37565"/>
    </ligand>
</feature>
<feature type="binding site" evidence="1">
    <location>
        <begin position="283"/>
        <end position="286"/>
    </location>
    <ligand>
        <name>GTP</name>
        <dbReference type="ChEBI" id="CHEBI:37565"/>
    </ligand>
</feature>
<feature type="binding site" evidence="1">
    <location>
        <begin position="314"/>
        <end position="316"/>
    </location>
    <ligand>
        <name>GTP</name>
        <dbReference type="ChEBI" id="CHEBI:37565"/>
    </ligand>
</feature>
<gene>
    <name evidence="1" type="primary">obg</name>
    <name type="ordered locus">BUAP5A_382</name>
</gene>
<accession>B8D9H2</accession>
<organism>
    <name type="scientific">Buchnera aphidicola subsp. Acyrthosiphon pisum (strain 5A)</name>
    <dbReference type="NCBI Taxonomy" id="563178"/>
    <lineage>
        <taxon>Bacteria</taxon>
        <taxon>Pseudomonadati</taxon>
        <taxon>Pseudomonadota</taxon>
        <taxon>Gammaproteobacteria</taxon>
        <taxon>Enterobacterales</taxon>
        <taxon>Erwiniaceae</taxon>
        <taxon>Buchnera</taxon>
    </lineage>
</organism>
<name>OBG_BUCA5</name>